<organism>
    <name type="scientific">Yersinia pseudotuberculosis serotype IB (strain PB1/+)</name>
    <dbReference type="NCBI Taxonomy" id="502801"/>
    <lineage>
        <taxon>Bacteria</taxon>
        <taxon>Pseudomonadati</taxon>
        <taxon>Pseudomonadota</taxon>
        <taxon>Gammaproteobacteria</taxon>
        <taxon>Enterobacterales</taxon>
        <taxon>Yersiniaceae</taxon>
        <taxon>Yersinia</taxon>
    </lineage>
</organism>
<proteinExistence type="inferred from homology"/>
<comment type="function">
    <text evidence="1">Converts 2-succinyl-6-hydroxy-2,4-cyclohexadiene-1-carboxylate (SHCHC) to 2-succinylbenzoate (OSB).</text>
</comment>
<comment type="catalytic activity">
    <reaction evidence="1">
        <text>(1R,6R)-6-hydroxy-2-succinyl-cyclohexa-2,4-diene-1-carboxylate = 2-succinylbenzoate + H2O</text>
        <dbReference type="Rhea" id="RHEA:10196"/>
        <dbReference type="ChEBI" id="CHEBI:15377"/>
        <dbReference type="ChEBI" id="CHEBI:18325"/>
        <dbReference type="ChEBI" id="CHEBI:58689"/>
        <dbReference type="EC" id="4.2.1.113"/>
    </reaction>
</comment>
<comment type="cofactor">
    <cofactor evidence="1">
        <name>a divalent metal cation</name>
        <dbReference type="ChEBI" id="CHEBI:60240"/>
    </cofactor>
</comment>
<comment type="pathway">
    <text evidence="1">Quinol/quinone metabolism; 1,4-dihydroxy-2-naphthoate biosynthesis; 1,4-dihydroxy-2-naphthoate from chorismate: step 4/7.</text>
</comment>
<comment type="pathway">
    <text evidence="1">Quinol/quinone metabolism; menaquinone biosynthesis.</text>
</comment>
<comment type="similarity">
    <text evidence="1">Belongs to the mandelate racemase/muconate lactonizing enzyme family. MenC type 1 subfamily.</text>
</comment>
<sequence length="323" mass="35269">MRTATLYRYSVPMEAGVILRHQRLKSRDGLLVKLQQGELSGWGEIAPLPEFSQETLDQAQVAAECWLQHWVSGVESDDSVLPSVAFGLSCAQAELKQTLPLSADYRKAPLCTGDPDELFAVLQALPGEKVAKVKVGLYEAVRDGMIVNVLLEALPDLTLRLDANRSWSRAKADGFAKYVNPALRSRIAFLEEPCKTRAESREFAQDTGIAIAWDESVREADFQVEAEPGVAAIVIKPTLVGSLARCQQLVQQAHQAGLVAVISSSIESSLGLTQLARLAAWLTPATVPGLDTLDLMQAQVVRPWPDSPLPLITTEQLGVVWHR</sequence>
<name>MENC_YERPB</name>
<gene>
    <name evidence="1" type="primary">menC</name>
    <name type="ordered locus">YPTS_2651</name>
</gene>
<accession>B2K7Z0</accession>
<protein>
    <recommendedName>
        <fullName evidence="1">o-succinylbenzoate synthase</fullName>
        <shortName evidence="1">OSB synthase</shortName>
        <shortName evidence="1">OSBS</shortName>
        <ecNumber evidence="1">4.2.1.113</ecNumber>
    </recommendedName>
    <alternativeName>
        <fullName evidence="1">4-(2'-carboxyphenyl)-4-oxybutyric acid synthase</fullName>
    </alternativeName>
    <alternativeName>
        <fullName evidence="1">o-succinylbenzoic acid synthase</fullName>
    </alternativeName>
</protein>
<evidence type="ECO:0000255" key="1">
    <source>
        <dbReference type="HAMAP-Rule" id="MF_00470"/>
    </source>
</evidence>
<feature type="chain" id="PRO_1000125588" description="o-succinylbenzoate synthase">
    <location>
        <begin position="1"/>
        <end position="323"/>
    </location>
</feature>
<feature type="active site" description="Proton donor" evidence="1">
    <location>
        <position position="134"/>
    </location>
</feature>
<feature type="active site" description="Proton acceptor" evidence="1">
    <location>
        <position position="236"/>
    </location>
</feature>
<feature type="binding site" evidence="1">
    <location>
        <position position="162"/>
    </location>
    <ligand>
        <name>Mg(2+)</name>
        <dbReference type="ChEBI" id="CHEBI:18420"/>
    </ligand>
</feature>
<feature type="binding site" evidence="1">
    <location>
        <position position="191"/>
    </location>
    <ligand>
        <name>Mg(2+)</name>
        <dbReference type="ChEBI" id="CHEBI:18420"/>
    </ligand>
</feature>
<feature type="binding site" evidence="1">
    <location>
        <position position="214"/>
    </location>
    <ligand>
        <name>Mg(2+)</name>
        <dbReference type="ChEBI" id="CHEBI:18420"/>
    </ligand>
</feature>
<keyword id="KW-0456">Lyase</keyword>
<keyword id="KW-0460">Magnesium</keyword>
<keyword id="KW-0474">Menaquinone biosynthesis</keyword>
<keyword id="KW-0479">Metal-binding</keyword>
<reference key="1">
    <citation type="submission" date="2008-04" db="EMBL/GenBank/DDBJ databases">
        <title>Complete sequence of Yersinia pseudotuberculosis PB1/+.</title>
        <authorList>
            <person name="Copeland A."/>
            <person name="Lucas S."/>
            <person name="Lapidus A."/>
            <person name="Glavina del Rio T."/>
            <person name="Dalin E."/>
            <person name="Tice H."/>
            <person name="Bruce D."/>
            <person name="Goodwin L."/>
            <person name="Pitluck S."/>
            <person name="Munk A.C."/>
            <person name="Brettin T."/>
            <person name="Detter J.C."/>
            <person name="Han C."/>
            <person name="Tapia R."/>
            <person name="Schmutz J."/>
            <person name="Larimer F."/>
            <person name="Land M."/>
            <person name="Hauser L."/>
            <person name="Challacombe J.F."/>
            <person name="Green L."/>
            <person name="Lindler L.E."/>
            <person name="Nikolich M.P."/>
            <person name="Richardson P."/>
        </authorList>
    </citation>
    <scope>NUCLEOTIDE SEQUENCE [LARGE SCALE GENOMIC DNA]</scope>
    <source>
        <strain>PB1/+</strain>
    </source>
</reference>
<dbReference type="EC" id="4.2.1.113" evidence="1"/>
<dbReference type="EMBL" id="CP001048">
    <property type="protein sequence ID" value="ACC89611.1"/>
    <property type="molecule type" value="Genomic_DNA"/>
</dbReference>
<dbReference type="RefSeq" id="WP_012413803.1">
    <property type="nucleotide sequence ID" value="NZ_CP009780.1"/>
</dbReference>
<dbReference type="SMR" id="B2K7Z0"/>
<dbReference type="KEGG" id="ypb:YPTS_2651"/>
<dbReference type="PATRIC" id="fig|502801.10.peg.2067"/>
<dbReference type="UniPathway" id="UPA00079"/>
<dbReference type="UniPathway" id="UPA01057">
    <property type="reaction ID" value="UER00165"/>
</dbReference>
<dbReference type="GO" id="GO:0000287">
    <property type="term" value="F:magnesium ion binding"/>
    <property type="evidence" value="ECO:0007669"/>
    <property type="project" value="UniProtKB-UniRule"/>
</dbReference>
<dbReference type="GO" id="GO:0043748">
    <property type="term" value="F:O-succinylbenzoate synthase activity"/>
    <property type="evidence" value="ECO:0007669"/>
    <property type="project" value="UniProtKB-EC"/>
</dbReference>
<dbReference type="GO" id="GO:0009234">
    <property type="term" value="P:menaquinone biosynthetic process"/>
    <property type="evidence" value="ECO:0007669"/>
    <property type="project" value="UniProtKB-UniRule"/>
</dbReference>
<dbReference type="CDD" id="cd03320">
    <property type="entry name" value="OSBS"/>
    <property type="match status" value="1"/>
</dbReference>
<dbReference type="Gene3D" id="3.20.20.120">
    <property type="entry name" value="Enolase-like C-terminal domain"/>
    <property type="match status" value="1"/>
</dbReference>
<dbReference type="Gene3D" id="3.30.390.10">
    <property type="entry name" value="Enolase-like, N-terminal domain"/>
    <property type="match status" value="1"/>
</dbReference>
<dbReference type="HAMAP" id="MF_00470">
    <property type="entry name" value="MenC_1"/>
    <property type="match status" value="1"/>
</dbReference>
<dbReference type="InterPro" id="IPR036849">
    <property type="entry name" value="Enolase-like_C_sf"/>
</dbReference>
<dbReference type="InterPro" id="IPR029017">
    <property type="entry name" value="Enolase-like_N"/>
</dbReference>
<dbReference type="InterPro" id="IPR029065">
    <property type="entry name" value="Enolase_C-like"/>
</dbReference>
<dbReference type="InterPro" id="IPR013342">
    <property type="entry name" value="Mandelate_racemase_C"/>
</dbReference>
<dbReference type="InterPro" id="IPR010196">
    <property type="entry name" value="OSB_synthase_MenC1"/>
</dbReference>
<dbReference type="InterPro" id="IPR041338">
    <property type="entry name" value="OSBS_N"/>
</dbReference>
<dbReference type="NCBIfam" id="TIGR01927">
    <property type="entry name" value="menC_gam_Gplu"/>
    <property type="match status" value="1"/>
</dbReference>
<dbReference type="NCBIfam" id="NF003473">
    <property type="entry name" value="PRK05105.1"/>
    <property type="match status" value="1"/>
</dbReference>
<dbReference type="PANTHER" id="PTHR48073:SF2">
    <property type="entry name" value="O-SUCCINYLBENZOATE SYNTHASE"/>
    <property type="match status" value="1"/>
</dbReference>
<dbReference type="PANTHER" id="PTHR48073">
    <property type="entry name" value="O-SUCCINYLBENZOATE SYNTHASE-RELATED"/>
    <property type="match status" value="1"/>
</dbReference>
<dbReference type="Pfam" id="PF21508">
    <property type="entry name" value="MenC_N"/>
    <property type="match status" value="1"/>
</dbReference>
<dbReference type="Pfam" id="PF13378">
    <property type="entry name" value="MR_MLE_C"/>
    <property type="match status" value="1"/>
</dbReference>
<dbReference type="SFLD" id="SFLDG00180">
    <property type="entry name" value="muconate_cycloisomerase"/>
    <property type="match status" value="1"/>
</dbReference>
<dbReference type="SFLD" id="SFLDF00009">
    <property type="entry name" value="o-succinylbenzoate_synthase"/>
    <property type="match status" value="1"/>
</dbReference>
<dbReference type="SMART" id="SM00922">
    <property type="entry name" value="MR_MLE"/>
    <property type="match status" value="1"/>
</dbReference>
<dbReference type="SUPFAM" id="SSF51604">
    <property type="entry name" value="Enolase C-terminal domain-like"/>
    <property type="match status" value="1"/>
</dbReference>
<dbReference type="SUPFAM" id="SSF54826">
    <property type="entry name" value="Enolase N-terminal domain-like"/>
    <property type="match status" value="1"/>
</dbReference>